<reference key="1">
    <citation type="submission" date="2005-09" db="EMBL/GenBank/DDBJ databases">
        <title>Complete sequence of chromosome 1 of Rhodobacter sphaeroides 2.4.1.</title>
        <authorList>
            <person name="Copeland A."/>
            <person name="Lucas S."/>
            <person name="Lapidus A."/>
            <person name="Barry K."/>
            <person name="Detter J.C."/>
            <person name="Glavina T."/>
            <person name="Hammon N."/>
            <person name="Israni S."/>
            <person name="Pitluck S."/>
            <person name="Richardson P."/>
            <person name="Mackenzie C."/>
            <person name="Choudhary M."/>
            <person name="Larimer F."/>
            <person name="Hauser L.J."/>
            <person name="Land M."/>
            <person name="Donohue T.J."/>
            <person name="Kaplan S."/>
        </authorList>
    </citation>
    <scope>NUCLEOTIDE SEQUENCE [LARGE SCALE GENOMIC DNA]</scope>
    <source>
        <strain>ATCC 17023 / DSM 158 / JCM 6121 / CCUG 31486 / LMG 2827 / NBRC 12203 / NCIMB 8253 / ATH 2.4.1.</strain>
    </source>
</reference>
<dbReference type="EC" id="1.1.1.25" evidence="1"/>
<dbReference type="EMBL" id="CP000143">
    <property type="protein sequence ID" value="ABA80415.1"/>
    <property type="molecule type" value="Genomic_DNA"/>
</dbReference>
<dbReference type="RefSeq" id="WP_011338809.1">
    <property type="nucleotide sequence ID" value="NC_007493.2"/>
</dbReference>
<dbReference type="RefSeq" id="YP_354316.1">
    <property type="nucleotide sequence ID" value="NC_007493.2"/>
</dbReference>
<dbReference type="SMR" id="Q3IYG9"/>
<dbReference type="STRING" id="272943.RSP_1234"/>
<dbReference type="EnsemblBacteria" id="ABA80415">
    <property type="protein sequence ID" value="ABA80415"/>
    <property type="gene ID" value="RSP_1234"/>
</dbReference>
<dbReference type="GeneID" id="3719682"/>
<dbReference type="KEGG" id="rsp:RSP_1234"/>
<dbReference type="PATRIC" id="fig|272943.9.peg.3215"/>
<dbReference type="eggNOG" id="COG0169">
    <property type="taxonomic scope" value="Bacteria"/>
</dbReference>
<dbReference type="OrthoDB" id="9792692at2"/>
<dbReference type="PhylomeDB" id="Q3IYG9"/>
<dbReference type="UniPathway" id="UPA00053">
    <property type="reaction ID" value="UER00087"/>
</dbReference>
<dbReference type="Proteomes" id="UP000002703">
    <property type="component" value="Chromosome 1"/>
</dbReference>
<dbReference type="GO" id="GO:0005829">
    <property type="term" value="C:cytosol"/>
    <property type="evidence" value="ECO:0007669"/>
    <property type="project" value="TreeGrafter"/>
</dbReference>
<dbReference type="GO" id="GO:0050661">
    <property type="term" value="F:NADP binding"/>
    <property type="evidence" value="ECO:0007669"/>
    <property type="project" value="InterPro"/>
</dbReference>
<dbReference type="GO" id="GO:0004764">
    <property type="term" value="F:shikimate 3-dehydrogenase (NADP+) activity"/>
    <property type="evidence" value="ECO:0007669"/>
    <property type="project" value="UniProtKB-UniRule"/>
</dbReference>
<dbReference type="GO" id="GO:0008652">
    <property type="term" value="P:amino acid biosynthetic process"/>
    <property type="evidence" value="ECO:0007669"/>
    <property type="project" value="UniProtKB-KW"/>
</dbReference>
<dbReference type="GO" id="GO:0009073">
    <property type="term" value="P:aromatic amino acid family biosynthetic process"/>
    <property type="evidence" value="ECO:0007669"/>
    <property type="project" value="UniProtKB-KW"/>
</dbReference>
<dbReference type="GO" id="GO:0009423">
    <property type="term" value="P:chorismate biosynthetic process"/>
    <property type="evidence" value="ECO:0007669"/>
    <property type="project" value="UniProtKB-UniRule"/>
</dbReference>
<dbReference type="GO" id="GO:0019632">
    <property type="term" value="P:shikimate metabolic process"/>
    <property type="evidence" value="ECO:0007669"/>
    <property type="project" value="InterPro"/>
</dbReference>
<dbReference type="CDD" id="cd01065">
    <property type="entry name" value="NAD_bind_Shikimate_DH"/>
    <property type="match status" value="1"/>
</dbReference>
<dbReference type="Gene3D" id="3.40.50.10860">
    <property type="entry name" value="Leucine Dehydrogenase, chain A, domain 1"/>
    <property type="match status" value="1"/>
</dbReference>
<dbReference type="Gene3D" id="3.40.50.720">
    <property type="entry name" value="NAD(P)-binding Rossmann-like Domain"/>
    <property type="match status" value="1"/>
</dbReference>
<dbReference type="HAMAP" id="MF_00222">
    <property type="entry name" value="Shikimate_DH_AroE"/>
    <property type="match status" value="1"/>
</dbReference>
<dbReference type="InterPro" id="IPR046346">
    <property type="entry name" value="Aminoacid_DH-like_N_sf"/>
</dbReference>
<dbReference type="InterPro" id="IPR036291">
    <property type="entry name" value="NAD(P)-bd_dom_sf"/>
</dbReference>
<dbReference type="InterPro" id="IPR041121">
    <property type="entry name" value="SDH_C"/>
</dbReference>
<dbReference type="InterPro" id="IPR011342">
    <property type="entry name" value="Shikimate_DH"/>
</dbReference>
<dbReference type="InterPro" id="IPR013708">
    <property type="entry name" value="Shikimate_DH-bd_N"/>
</dbReference>
<dbReference type="InterPro" id="IPR022893">
    <property type="entry name" value="Shikimate_DH_fam"/>
</dbReference>
<dbReference type="InterPro" id="IPR006151">
    <property type="entry name" value="Shikm_DH/Glu-tRNA_Rdtase"/>
</dbReference>
<dbReference type="NCBIfam" id="TIGR00507">
    <property type="entry name" value="aroE"/>
    <property type="match status" value="1"/>
</dbReference>
<dbReference type="NCBIfam" id="NF001312">
    <property type="entry name" value="PRK00258.1-4"/>
    <property type="match status" value="1"/>
</dbReference>
<dbReference type="PANTHER" id="PTHR21089:SF1">
    <property type="entry name" value="BIFUNCTIONAL 3-DEHYDROQUINATE DEHYDRATASE_SHIKIMATE DEHYDROGENASE, CHLOROPLASTIC"/>
    <property type="match status" value="1"/>
</dbReference>
<dbReference type="PANTHER" id="PTHR21089">
    <property type="entry name" value="SHIKIMATE DEHYDROGENASE"/>
    <property type="match status" value="1"/>
</dbReference>
<dbReference type="Pfam" id="PF18317">
    <property type="entry name" value="SDH_C"/>
    <property type="match status" value="1"/>
</dbReference>
<dbReference type="Pfam" id="PF01488">
    <property type="entry name" value="Shikimate_DH"/>
    <property type="match status" value="1"/>
</dbReference>
<dbReference type="Pfam" id="PF08501">
    <property type="entry name" value="Shikimate_dh_N"/>
    <property type="match status" value="1"/>
</dbReference>
<dbReference type="SUPFAM" id="SSF53223">
    <property type="entry name" value="Aminoacid dehydrogenase-like, N-terminal domain"/>
    <property type="match status" value="1"/>
</dbReference>
<dbReference type="SUPFAM" id="SSF51735">
    <property type="entry name" value="NAD(P)-binding Rossmann-fold domains"/>
    <property type="match status" value="1"/>
</dbReference>
<comment type="function">
    <text evidence="1">Involved in the biosynthesis of the chorismate, which leads to the biosynthesis of aromatic amino acids. Catalyzes the reversible NADPH linked reduction of 3-dehydroshikimate (DHSA) to yield shikimate (SA).</text>
</comment>
<comment type="catalytic activity">
    <reaction evidence="1">
        <text>shikimate + NADP(+) = 3-dehydroshikimate + NADPH + H(+)</text>
        <dbReference type="Rhea" id="RHEA:17737"/>
        <dbReference type="ChEBI" id="CHEBI:15378"/>
        <dbReference type="ChEBI" id="CHEBI:16630"/>
        <dbReference type="ChEBI" id="CHEBI:36208"/>
        <dbReference type="ChEBI" id="CHEBI:57783"/>
        <dbReference type="ChEBI" id="CHEBI:58349"/>
        <dbReference type="EC" id="1.1.1.25"/>
    </reaction>
</comment>
<comment type="pathway">
    <text evidence="1">Metabolic intermediate biosynthesis; chorismate biosynthesis; chorismate from D-erythrose 4-phosphate and phosphoenolpyruvate: step 4/7.</text>
</comment>
<comment type="subunit">
    <text evidence="1">Homodimer.</text>
</comment>
<comment type="similarity">
    <text evidence="1">Belongs to the shikimate dehydrogenase family.</text>
</comment>
<gene>
    <name evidence="1" type="primary">aroE</name>
    <name type="ordered locus">RHOS4_28470</name>
    <name type="ordered locus">RSP_1234</name>
</gene>
<name>AROE_CERS4</name>
<evidence type="ECO:0000255" key="1">
    <source>
        <dbReference type="HAMAP-Rule" id="MF_00222"/>
    </source>
</evidence>
<organism>
    <name type="scientific">Cereibacter sphaeroides (strain ATCC 17023 / DSM 158 / JCM 6121 / CCUG 31486 / LMG 2827 / NBRC 12203 / NCIMB 8253 / ATH 2.4.1.)</name>
    <name type="common">Rhodobacter sphaeroides</name>
    <dbReference type="NCBI Taxonomy" id="272943"/>
    <lineage>
        <taxon>Bacteria</taxon>
        <taxon>Pseudomonadati</taxon>
        <taxon>Pseudomonadota</taxon>
        <taxon>Alphaproteobacteria</taxon>
        <taxon>Rhodobacterales</taxon>
        <taxon>Paracoccaceae</taxon>
        <taxon>Cereibacter</taxon>
    </lineage>
</organism>
<proteinExistence type="inferred from homology"/>
<protein>
    <recommendedName>
        <fullName evidence="1">Shikimate dehydrogenase (NADP(+))</fullName>
        <shortName evidence="1">SDH</shortName>
        <ecNumber evidence="1">1.1.1.25</ecNumber>
    </recommendedName>
</protein>
<accession>Q3IYG9</accession>
<feature type="chain" id="PRO_1000021324" description="Shikimate dehydrogenase (NADP(+))">
    <location>
        <begin position="1"/>
        <end position="279"/>
    </location>
</feature>
<feature type="active site" description="Proton acceptor" evidence="1">
    <location>
        <position position="71"/>
    </location>
</feature>
<feature type="binding site" evidence="1">
    <location>
        <begin position="20"/>
        <end position="22"/>
    </location>
    <ligand>
        <name>shikimate</name>
        <dbReference type="ChEBI" id="CHEBI:36208"/>
    </ligand>
</feature>
<feature type="binding site" evidence="1">
    <location>
        <position position="67"/>
    </location>
    <ligand>
        <name>shikimate</name>
        <dbReference type="ChEBI" id="CHEBI:36208"/>
    </ligand>
</feature>
<feature type="binding site" evidence="1">
    <location>
        <position position="83"/>
    </location>
    <ligand>
        <name>NADP(+)</name>
        <dbReference type="ChEBI" id="CHEBI:58349"/>
    </ligand>
</feature>
<feature type="binding site" evidence="1">
    <location>
        <position position="92"/>
    </location>
    <ligand>
        <name>shikimate</name>
        <dbReference type="ChEBI" id="CHEBI:36208"/>
    </ligand>
</feature>
<feature type="binding site" evidence="1">
    <location>
        <position position="108"/>
    </location>
    <ligand>
        <name>shikimate</name>
        <dbReference type="ChEBI" id="CHEBI:36208"/>
    </ligand>
</feature>
<feature type="binding site" evidence="1">
    <location>
        <begin position="134"/>
        <end position="138"/>
    </location>
    <ligand>
        <name>NADP(+)</name>
        <dbReference type="ChEBI" id="CHEBI:58349"/>
    </ligand>
</feature>
<feature type="binding site" evidence="1">
    <location>
        <position position="223"/>
    </location>
    <ligand>
        <name>NADP(+)</name>
        <dbReference type="ChEBI" id="CHEBI:58349"/>
    </ligand>
</feature>
<feature type="binding site" evidence="1">
    <location>
        <position position="225"/>
    </location>
    <ligand>
        <name>shikimate</name>
        <dbReference type="ChEBI" id="CHEBI:36208"/>
    </ligand>
</feature>
<feature type="binding site" evidence="1">
    <location>
        <position position="246"/>
    </location>
    <ligand>
        <name>NADP(+)</name>
        <dbReference type="ChEBI" id="CHEBI:58349"/>
    </ligand>
</feature>
<sequence length="279" mass="29715">MTELTRIPLAGVIGSPIAHSRSPALHGYWLKRYGLKGHYIPMDVAQADLRDVLAAMPRMGFVGCNVTIPHKESVIGLADIVTDRAALIGAANTLIFGKDGKIHADNTDGTGFTANLRQNAPAWQPQSGPAVVWGAGGAARAVIAALIEVGVPEIRLANRSRARADALRSDFGAKVHVHDWVQAGNILEDAMTVVNTTSLGMVGKPEFRVPLDALNPKAVVTDLVYAPLRTRLLVEAEAAGCRTVDGLGMLLHQAAPGFERWFGVRPEVDEETRAAVLAT</sequence>
<keyword id="KW-0028">Amino-acid biosynthesis</keyword>
<keyword id="KW-0057">Aromatic amino acid biosynthesis</keyword>
<keyword id="KW-0521">NADP</keyword>
<keyword id="KW-0560">Oxidoreductase</keyword>
<keyword id="KW-1185">Reference proteome</keyword>